<comment type="function">
    <text evidence="1">Produces ATP from ADP in the presence of a proton gradient across the membrane. The catalytic sites are hosted primarily by the beta subunits.</text>
</comment>
<comment type="catalytic activity">
    <reaction evidence="1">
        <text>ATP + H2O + 4 H(+)(in) = ADP + phosphate + 5 H(+)(out)</text>
        <dbReference type="Rhea" id="RHEA:57720"/>
        <dbReference type="ChEBI" id="CHEBI:15377"/>
        <dbReference type="ChEBI" id="CHEBI:15378"/>
        <dbReference type="ChEBI" id="CHEBI:30616"/>
        <dbReference type="ChEBI" id="CHEBI:43474"/>
        <dbReference type="ChEBI" id="CHEBI:456216"/>
        <dbReference type="EC" id="7.1.2.2"/>
    </reaction>
</comment>
<comment type="subunit">
    <text evidence="1">F-type ATPases have 2 components, CF(1) - the catalytic core - and CF(0) - the membrane proton channel. CF(1) has five subunits: alpha(3), beta(3), gamma(1), delta(1), epsilon(1). CF(0) has four main subunits: a(1), b(1), b'(1) and c(9-12).</text>
</comment>
<comment type="subcellular location">
    <subcellularLocation>
        <location evidence="1">Plastid</location>
        <location evidence="1">Chloroplast thylakoid membrane</location>
        <topology evidence="1">Peripheral membrane protein</topology>
    </subcellularLocation>
</comment>
<comment type="similarity">
    <text evidence="1">Belongs to the ATPase alpha/beta chains family.</text>
</comment>
<sequence length="498" mass="53631">MRINPTTSGPGVSTLEKKNLGRIAQIIGPVLDVAFPPGKMPNIYNALVVKGRDTVGQQINVACEVQQLLGNNRVRAVAMSATDGLMRGMEVIDTGAPLSVPVGGATLGRIFNVLGEPVDNLGPVDTRTTSPIHRSAPAFIQLDTKLSIFETGIKVVDLLAPYRRGGKIGLFGGAGVGKTVLIMELINNIAKAHGGVSVFGGVGERTREGNDLYMEMKESGVINEQNIAESKVALVHGQMNEPPGARMRVGLTALTMAEYFRDVNEQDVLLFIDNIFRFVQAGSEVSALLGRMPSAVGYQPTLSTEMGSLQERITSTKEGSITSIQAVYVPADDLTDPAPATTFAHLDATTVLSRGLAAKGIYPAVDPLDSTSTMLQPRIVGEEHYETAQRVKQTSQRYKELQDIIAILGLDELSEEDRLTVARARKMERFLSQPFFVAEVFTGSPGKYVGLAETIRGFQLILSGELDGLPEQAFYLVGNIDEATAKAMKLELESNLKK</sequence>
<keyword id="KW-0066">ATP synthesis</keyword>
<keyword id="KW-0067">ATP-binding</keyword>
<keyword id="KW-0139">CF(1)</keyword>
<keyword id="KW-0150">Chloroplast</keyword>
<keyword id="KW-0375">Hydrogen ion transport</keyword>
<keyword id="KW-0406">Ion transport</keyword>
<keyword id="KW-0472">Membrane</keyword>
<keyword id="KW-0547">Nucleotide-binding</keyword>
<keyword id="KW-0934">Plastid</keyword>
<keyword id="KW-0793">Thylakoid</keyword>
<keyword id="KW-1278">Translocase</keyword>
<keyword id="KW-0813">Transport</keyword>
<feature type="chain" id="PRO_0000254485" description="ATP synthase subunit beta, chloroplastic">
    <location>
        <begin position="1"/>
        <end position="498"/>
    </location>
</feature>
<feature type="binding site" evidence="1">
    <location>
        <begin position="172"/>
        <end position="179"/>
    </location>
    <ligand>
        <name>ATP</name>
        <dbReference type="ChEBI" id="CHEBI:30616"/>
    </ligand>
</feature>
<proteinExistence type="inferred from homology"/>
<gene>
    <name evidence="1" type="primary">atpB</name>
</gene>
<accession>Q9MRF3</accession>
<name>ATPB_IDIAU</name>
<geneLocation type="chloroplast"/>
<organism>
    <name type="scientific">Idiospermum australiense</name>
    <name type="common">Ribbonwood tree</name>
    <name type="synonym">Calycanthus australiensis</name>
    <dbReference type="NCBI Taxonomy" id="13573"/>
    <lineage>
        <taxon>Eukaryota</taxon>
        <taxon>Viridiplantae</taxon>
        <taxon>Streptophyta</taxon>
        <taxon>Embryophyta</taxon>
        <taxon>Tracheophyta</taxon>
        <taxon>Spermatophyta</taxon>
        <taxon>Magnoliopsida</taxon>
        <taxon>Magnoliidae</taxon>
        <taxon>Laurales</taxon>
        <taxon>Calycanthaceae</taxon>
        <taxon>Idiospermoideae</taxon>
        <taxon>Idiospermum</taxon>
    </lineage>
</organism>
<dbReference type="EC" id="7.1.2.2" evidence="1"/>
<dbReference type="EMBL" id="AJ235500">
    <property type="protein sequence ID" value="CAB89714.1"/>
    <property type="molecule type" value="Genomic_DNA"/>
</dbReference>
<dbReference type="SMR" id="Q9MRF3"/>
<dbReference type="GO" id="GO:0009535">
    <property type="term" value="C:chloroplast thylakoid membrane"/>
    <property type="evidence" value="ECO:0007669"/>
    <property type="project" value="UniProtKB-SubCell"/>
</dbReference>
<dbReference type="GO" id="GO:0005739">
    <property type="term" value="C:mitochondrion"/>
    <property type="evidence" value="ECO:0007669"/>
    <property type="project" value="GOC"/>
</dbReference>
<dbReference type="GO" id="GO:0045259">
    <property type="term" value="C:proton-transporting ATP synthase complex"/>
    <property type="evidence" value="ECO:0007669"/>
    <property type="project" value="UniProtKB-KW"/>
</dbReference>
<dbReference type="GO" id="GO:0005524">
    <property type="term" value="F:ATP binding"/>
    <property type="evidence" value="ECO:0007669"/>
    <property type="project" value="UniProtKB-UniRule"/>
</dbReference>
<dbReference type="GO" id="GO:0016887">
    <property type="term" value="F:ATP hydrolysis activity"/>
    <property type="evidence" value="ECO:0007669"/>
    <property type="project" value="InterPro"/>
</dbReference>
<dbReference type="GO" id="GO:0046933">
    <property type="term" value="F:proton-transporting ATP synthase activity, rotational mechanism"/>
    <property type="evidence" value="ECO:0007669"/>
    <property type="project" value="UniProtKB-UniRule"/>
</dbReference>
<dbReference type="GO" id="GO:0042776">
    <property type="term" value="P:proton motive force-driven mitochondrial ATP synthesis"/>
    <property type="evidence" value="ECO:0007669"/>
    <property type="project" value="TreeGrafter"/>
</dbReference>
<dbReference type="CDD" id="cd18110">
    <property type="entry name" value="ATP-synt_F1_beta_C"/>
    <property type="match status" value="1"/>
</dbReference>
<dbReference type="CDD" id="cd18115">
    <property type="entry name" value="ATP-synt_F1_beta_N"/>
    <property type="match status" value="1"/>
</dbReference>
<dbReference type="CDD" id="cd01133">
    <property type="entry name" value="F1-ATPase_beta_CD"/>
    <property type="match status" value="1"/>
</dbReference>
<dbReference type="FunFam" id="1.10.1140.10:FF:000001">
    <property type="entry name" value="ATP synthase subunit beta"/>
    <property type="match status" value="1"/>
</dbReference>
<dbReference type="FunFam" id="3.40.50.12240:FF:000006">
    <property type="entry name" value="ATP synthase subunit beta"/>
    <property type="match status" value="1"/>
</dbReference>
<dbReference type="FunFam" id="3.40.50.300:FF:000004">
    <property type="entry name" value="ATP synthase subunit beta"/>
    <property type="match status" value="1"/>
</dbReference>
<dbReference type="FunFam" id="2.40.10.170:FF:000002">
    <property type="entry name" value="ATP synthase subunit beta, chloroplastic"/>
    <property type="match status" value="1"/>
</dbReference>
<dbReference type="Gene3D" id="2.40.10.170">
    <property type="match status" value="1"/>
</dbReference>
<dbReference type="Gene3D" id="1.10.1140.10">
    <property type="entry name" value="Bovine Mitochondrial F1-atpase, Atp Synthase Beta Chain, Chain D, domain 3"/>
    <property type="match status" value="1"/>
</dbReference>
<dbReference type="Gene3D" id="3.40.50.300">
    <property type="entry name" value="P-loop containing nucleotide triphosphate hydrolases"/>
    <property type="match status" value="1"/>
</dbReference>
<dbReference type="HAMAP" id="MF_01347">
    <property type="entry name" value="ATP_synth_beta_bact"/>
    <property type="match status" value="1"/>
</dbReference>
<dbReference type="InterPro" id="IPR003593">
    <property type="entry name" value="AAA+_ATPase"/>
</dbReference>
<dbReference type="InterPro" id="IPR055190">
    <property type="entry name" value="ATP-synt_VA_C"/>
</dbReference>
<dbReference type="InterPro" id="IPR005722">
    <property type="entry name" value="ATP_synth_F1_bsu"/>
</dbReference>
<dbReference type="InterPro" id="IPR020003">
    <property type="entry name" value="ATPase_a/bsu_AS"/>
</dbReference>
<dbReference type="InterPro" id="IPR050053">
    <property type="entry name" value="ATPase_alpha/beta_chains"/>
</dbReference>
<dbReference type="InterPro" id="IPR004100">
    <property type="entry name" value="ATPase_F1/V1/A1_a/bsu_N"/>
</dbReference>
<dbReference type="InterPro" id="IPR036121">
    <property type="entry name" value="ATPase_F1/V1/A1_a/bsu_N_sf"/>
</dbReference>
<dbReference type="InterPro" id="IPR000194">
    <property type="entry name" value="ATPase_F1/V1/A1_a/bsu_nucl-bd"/>
</dbReference>
<dbReference type="InterPro" id="IPR024034">
    <property type="entry name" value="ATPase_F1/V1_b/a_C"/>
</dbReference>
<dbReference type="InterPro" id="IPR027417">
    <property type="entry name" value="P-loop_NTPase"/>
</dbReference>
<dbReference type="NCBIfam" id="TIGR01039">
    <property type="entry name" value="atpD"/>
    <property type="match status" value="1"/>
</dbReference>
<dbReference type="PANTHER" id="PTHR15184">
    <property type="entry name" value="ATP SYNTHASE"/>
    <property type="match status" value="1"/>
</dbReference>
<dbReference type="PANTHER" id="PTHR15184:SF71">
    <property type="entry name" value="ATP SYNTHASE SUBUNIT BETA, MITOCHONDRIAL"/>
    <property type="match status" value="1"/>
</dbReference>
<dbReference type="Pfam" id="PF00006">
    <property type="entry name" value="ATP-synt_ab"/>
    <property type="match status" value="1"/>
</dbReference>
<dbReference type="Pfam" id="PF02874">
    <property type="entry name" value="ATP-synt_ab_N"/>
    <property type="match status" value="1"/>
</dbReference>
<dbReference type="Pfam" id="PF22919">
    <property type="entry name" value="ATP-synt_VA_C"/>
    <property type="match status" value="1"/>
</dbReference>
<dbReference type="SMART" id="SM00382">
    <property type="entry name" value="AAA"/>
    <property type="match status" value="1"/>
</dbReference>
<dbReference type="SUPFAM" id="SSF47917">
    <property type="entry name" value="C-terminal domain of alpha and beta subunits of F1 ATP synthase"/>
    <property type="match status" value="1"/>
</dbReference>
<dbReference type="SUPFAM" id="SSF50615">
    <property type="entry name" value="N-terminal domain of alpha and beta subunits of F1 ATP synthase"/>
    <property type="match status" value="1"/>
</dbReference>
<dbReference type="SUPFAM" id="SSF52540">
    <property type="entry name" value="P-loop containing nucleoside triphosphate hydrolases"/>
    <property type="match status" value="1"/>
</dbReference>
<dbReference type="PROSITE" id="PS00152">
    <property type="entry name" value="ATPASE_ALPHA_BETA"/>
    <property type="match status" value="1"/>
</dbReference>
<evidence type="ECO:0000255" key="1">
    <source>
        <dbReference type="HAMAP-Rule" id="MF_01347"/>
    </source>
</evidence>
<reference key="1">
    <citation type="journal article" date="2000" name="Syst. Biol.">
        <title>Phylogenetics of flowering plants based upon a combined analysis of plastid atpB and rbcL gene sequences.</title>
        <authorList>
            <person name="Savolainen V."/>
            <person name="Chase M.W."/>
            <person name="Morton C.M."/>
            <person name="Hoot S.B."/>
            <person name="Soltis D.E."/>
            <person name="Bayer C."/>
            <person name="Fay M.F."/>
            <person name="de Bruijn A."/>
            <person name="Sullivan S."/>
            <person name="Qiu Y.-L."/>
        </authorList>
    </citation>
    <scope>NUCLEOTIDE SEQUENCE [GENOMIC DNA]</scope>
</reference>
<protein>
    <recommendedName>
        <fullName evidence="1">ATP synthase subunit beta, chloroplastic</fullName>
        <ecNumber evidence="1">7.1.2.2</ecNumber>
    </recommendedName>
    <alternativeName>
        <fullName evidence="1">ATP synthase F1 sector subunit beta</fullName>
    </alternativeName>
    <alternativeName>
        <fullName evidence="1">F-ATPase subunit beta</fullName>
    </alternativeName>
</protein>